<reference key="1">
    <citation type="journal article" date="2000" name="Science">
        <title>The genome sequence of Drosophila melanogaster.</title>
        <authorList>
            <person name="Adams M.D."/>
            <person name="Celniker S.E."/>
            <person name="Holt R.A."/>
            <person name="Evans C.A."/>
            <person name="Gocayne J.D."/>
            <person name="Amanatides P.G."/>
            <person name="Scherer S.E."/>
            <person name="Li P.W."/>
            <person name="Hoskins R.A."/>
            <person name="Galle R.F."/>
            <person name="George R.A."/>
            <person name="Lewis S.E."/>
            <person name="Richards S."/>
            <person name="Ashburner M."/>
            <person name="Henderson S.N."/>
            <person name="Sutton G.G."/>
            <person name="Wortman J.R."/>
            <person name="Yandell M.D."/>
            <person name="Zhang Q."/>
            <person name="Chen L.X."/>
            <person name="Brandon R.C."/>
            <person name="Rogers Y.-H.C."/>
            <person name="Blazej R.G."/>
            <person name="Champe M."/>
            <person name="Pfeiffer B.D."/>
            <person name="Wan K.H."/>
            <person name="Doyle C."/>
            <person name="Baxter E.G."/>
            <person name="Helt G."/>
            <person name="Nelson C.R."/>
            <person name="Miklos G.L.G."/>
            <person name="Abril J.F."/>
            <person name="Agbayani A."/>
            <person name="An H.-J."/>
            <person name="Andrews-Pfannkoch C."/>
            <person name="Baldwin D."/>
            <person name="Ballew R.M."/>
            <person name="Basu A."/>
            <person name="Baxendale J."/>
            <person name="Bayraktaroglu L."/>
            <person name="Beasley E.M."/>
            <person name="Beeson K.Y."/>
            <person name="Benos P.V."/>
            <person name="Berman B.P."/>
            <person name="Bhandari D."/>
            <person name="Bolshakov S."/>
            <person name="Borkova D."/>
            <person name="Botchan M.R."/>
            <person name="Bouck J."/>
            <person name="Brokstein P."/>
            <person name="Brottier P."/>
            <person name="Burtis K.C."/>
            <person name="Busam D.A."/>
            <person name="Butler H."/>
            <person name="Cadieu E."/>
            <person name="Center A."/>
            <person name="Chandra I."/>
            <person name="Cherry J.M."/>
            <person name="Cawley S."/>
            <person name="Dahlke C."/>
            <person name="Davenport L.B."/>
            <person name="Davies P."/>
            <person name="de Pablos B."/>
            <person name="Delcher A."/>
            <person name="Deng Z."/>
            <person name="Mays A.D."/>
            <person name="Dew I."/>
            <person name="Dietz S.M."/>
            <person name="Dodson K."/>
            <person name="Doup L.E."/>
            <person name="Downes M."/>
            <person name="Dugan-Rocha S."/>
            <person name="Dunkov B.C."/>
            <person name="Dunn P."/>
            <person name="Durbin K.J."/>
            <person name="Evangelista C.C."/>
            <person name="Ferraz C."/>
            <person name="Ferriera S."/>
            <person name="Fleischmann W."/>
            <person name="Fosler C."/>
            <person name="Gabrielian A.E."/>
            <person name="Garg N.S."/>
            <person name="Gelbart W.M."/>
            <person name="Glasser K."/>
            <person name="Glodek A."/>
            <person name="Gong F."/>
            <person name="Gorrell J.H."/>
            <person name="Gu Z."/>
            <person name="Guan P."/>
            <person name="Harris M."/>
            <person name="Harris N.L."/>
            <person name="Harvey D.A."/>
            <person name="Heiman T.J."/>
            <person name="Hernandez J.R."/>
            <person name="Houck J."/>
            <person name="Hostin D."/>
            <person name="Houston K.A."/>
            <person name="Howland T.J."/>
            <person name="Wei M.-H."/>
            <person name="Ibegwam C."/>
            <person name="Jalali M."/>
            <person name="Kalush F."/>
            <person name="Karpen G.H."/>
            <person name="Ke Z."/>
            <person name="Kennison J.A."/>
            <person name="Ketchum K.A."/>
            <person name="Kimmel B.E."/>
            <person name="Kodira C.D."/>
            <person name="Kraft C.L."/>
            <person name="Kravitz S."/>
            <person name="Kulp D."/>
            <person name="Lai Z."/>
            <person name="Lasko P."/>
            <person name="Lei Y."/>
            <person name="Levitsky A.A."/>
            <person name="Li J.H."/>
            <person name="Li Z."/>
            <person name="Liang Y."/>
            <person name="Lin X."/>
            <person name="Liu X."/>
            <person name="Mattei B."/>
            <person name="McIntosh T.C."/>
            <person name="McLeod M.P."/>
            <person name="McPherson D."/>
            <person name="Merkulov G."/>
            <person name="Milshina N.V."/>
            <person name="Mobarry C."/>
            <person name="Morris J."/>
            <person name="Moshrefi A."/>
            <person name="Mount S.M."/>
            <person name="Moy M."/>
            <person name="Murphy B."/>
            <person name="Murphy L."/>
            <person name="Muzny D.M."/>
            <person name="Nelson D.L."/>
            <person name="Nelson D.R."/>
            <person name="Nelson K.A."/>
            <person name="Nixon K."/>
            <person name="Nusskern D.R."/>
            <person name="Pacleb J.M."/>
            <person name="Palazzolo M."/>
            <person name="Pittman G.S."/>
            <person name="Pan S."/>
            <person name="Pollard J."/>
            <person name="Puri V."/>
            <person name="Reese M.G."/>
            <person name="Reinert K."/>
            <person name="Remington K."/>
            <person name="Saunders R.D.C."/>
            <person name="Scheeler F."/>
            <person name="Shen H."/>
            <person name="Shue B.C."/>
            <person name="Siden-Kiamos I."/>
            <person name="Simpson M."/>
            <person name="Skupski M.P."/>
            <person name="Smith T.J."/>
            <person name="Spier E."/>
            <person name="Spradling A.C."/>
            <person name="Stapleton M."/>
            <person name="Strong R."/>
            <person name="Sun E."/>
            <person name="Svirskas R."/>
            <person name="Tector C."/>
            <person name="Turner R."/>
            <person name="Venter E."/>
            <person name="Wang A.H."/>
            <person name="Wang X."/>
            <person name="Wang Z.-Y."/>
            <person name="Wassarman D.A."/>
            <person name="Weinstock G.M."/>
            <person name="Weissenbach J."/>
            <person name="Williams S.M."/>
            <person name="Woodage T."/>
            <person name="Worley K.C."/>
            <person name="Wu D."/>
            <person name="Yang S."/>
            <person name="Yao Q.A."/>
            <person name="Ye J."/>
            <person name="Yeh R.-F."/>
            <person name="Zaveri J.S."/>
            <person name="Zhan M."/>
            <person name="Zhang G."/>
            <person name="Zhao Q."/>
            <person name="Zheng L."/>
            <person name="Zheng X.H."/>
            <person name="Zhong F.N."/>
            <person name="Zhong W."/>
            <person name="Zhou X."/>
            <person name="Zhu S.C."/>
            <person name="Zhu X."/>
            <person name="Smith H.O."/>
            <person name="Gibbs R.A."/>
            <person name="Myers E.W."/>
            <person name="Rubin G.M."/>
            <person name="Venter J.C."/>
        </authorList>
    </citation>
    <scope>NUCLEOTIDE SEQUENCE [LARGE SCALE GENOMIC DNA]</scope>
    <source>
        <strain>Berkeley</strain>
    </source>
</reference>
<reference key="2">
    <citation type="journal article" date="2002" name="Genome Biol.">
        <title>Annotation of the Drosophila melanogaster euchromatic genome: a systematic review.</title>
        <authorList>
            <person name="Misra S."/>
            <person name="Crosby M.A."/>
            <person name="Mungall C.J."/>
            <person name="Matthews B.B."/>
            <person name="Campbell K.S."/>
            <person name="Hradecky P."/>
            <person name="Huang Y."/>
            <person name="Kaminker J.S."/>
            <person name="Millburn G.H."/>
            <person name="Prochnik S.E."/>
            <person name="Smith C.D."/>
            <person name="Tupy J.L."/>
            <person name="Whitfield E.J."/>
            <person name="Bayraktaroglu L."/>
            <person name="Berman B.P."/>
            <person name="Bettencourt B.R."/>
            <person name="Celniker S.E."/>
            <person name="de Grey A.D.N.J."/>
            <person name="Drysdale R.A."/>
            <person name="Harris N.L."/>
            <person name="Richter J."/>
            <person name="Russo S."/>
            <person name="Schroeder A.J."/>
            <person name="Shu S.Q."/>
            <person name="Stapleton M."/>
            <person name="Yamada C."/>
            <person name="Ashburner M."/>
            <person name="Gelbart W.M."/>
            <person name="Rubin G.M."/>
            <person name="Lewis S.E."/>
        </authorList>
    </citation>
    <scope>GENOME REANNOTATION</scope>
    <source>
        <strain>Berkeley</strain>
    </source>
</reference>
<reference key="3">
    <citation type="journal article" date="2002" name="Genome Biol.">
        <title>A Drosophila full-length cDNA resource.</title>
        <authorList>
            <person name="Stapleton M."/>
            <person name="Carlson J.W."/>
            <person name="Brokstein P."/>
            <person name="Yu C."/>
            <person name="Champe M."/>
            <person name="George R.A."/>
            <person name="Guarin H."/>
            <person name="Kronmiller B."/>
            <person name="Pacleb J.M."/>
            <person name="Park S."/>
            <person name="Wan K.H."/>
            <person name="Rubin G.M."/>
            <person name="Celniker S.E."/>
        </authorList>
    </citation>
    <scope>NUCLEOTIDE SEQUENCE [LARGE SCALE MRNA]</scope>
    <source>
        <strain>Berkeley</strain>
        <tissue>Embryo</tissue>
    </source>
</reference>
<reference key="4">
    <citation type="journal article" date="2011" name="Nat. Genet.">
        <title>Mutations in TTC19 cause mitochondrial complex III deficiency and neurological impairment in humans and flies.</title>
        <authorList>
            <person name="Ghezzi D."/>
            <person name="Arzuffi P."/>
            <person name="Zordan M."/>
            <person name="Da Re C."/>
            <person name="Lamperti C."/>
            <person name="Benna C."/>
            <person name="D'Adamo P."/>
            <person name="Diodato D."/>
            <person name="Costa R."/>
            <person name="Mariotti C."/>
            <person name="Uziel G."/>
            <person name="Smiderle C."/>
            <person name="Zeviani M."/>
        </authorList>
    </citation>
    <scope>SUBCELLULAR LOCATION</scope>
    <scope>DISRUPTION PHENOTYPE</scope>
</reference>
<feature type="transit peptide" description="Mitochondrion" evidence="2">
    <location>
        <begin position="1"/>
        <end status="unknown"/>
    </location>
</feature>
<feature type="chain" id="PRO_0000408356" description="Tetratricopeptide repeat protein 19 homolog, mitochondrial">
    <location>
        <begin status="unknown"/>
        <end position="369"/>
    </location>
</feature>
<feature type="repeat" description="TPR 1">
    <location>
        <begin position="97"/>
        <end position="130"/>
    </location>
</feature>
<feature type="repeat" description="TPR 2">
    <location>
        <begin position="137"/>
        <end position="170"/>
    </location>
</feature>
<feature type="repeat" description="TPR 3">
    <location>
        <begin position="228"/>
        <end position="261"/>
    </location>
</feature>
<feature type="repeat" description="TPR 4">
    <location>
        <begin position="270"/>
        <end position="303"/>
    </location>
</feature>
<feature type="repeat" description="TPR 5">
    <location>
        <begin position="310"/>
        <end position="343"/>
    </location>
</feature>
<name>TTC19_DROME</name>
<keyword id="KW-0496">Mitochondrion</keyword>
<keyword id="KW-1185">Reference proteome</keyword>
<keyword id="KW-0677">Repeat</keyword>
<keyword id="KW-0802">TPR repeat</keyword>
<keyword id="KW-0809">Transit peptide</keyword>
<protein>
    <recommendedName>
        <fullName>Tetratricopeptide repeat protein 19 homolog, mitochondrial</fullName>
    </recommendedName>
</protein>
<comment type="function">
    <text evidence="1">Required for mitochondrial complex III formation.</text>
</comment>
<comment type="subcellular location">
    <subcellularLocation>
        <location evidence="3">Mitochondrion</location>
    </subcellularLocation>
</comment>
<comment type="disruption phenotype">
    <text evidence="3">Low fertility, adult-onset locomotor impairment and bang sensitivity, associated with mitochondrial complex III deficiency.</text>
</comment>
<comment type="similarity">
    <text evidence="4">Belongs to the TTC19 family.</text>
</comment>
<sequence>MLVRNICKFTQVMGRFRVVVNPRDYCHLAPLKRSRYHQRSEFGCRPLCSNAAGYEVSWAAPPASGSSGGMFWAFSAAFTLNLFGGADEKEETPEEKLIKTIKRSILCIQREQYDKAEQMLHLALRMAQDIQSKDGITYVFDLMANLAMEREQFKKAEKIFTDVMKRLFAEGHTEESPKILHISSKIAHMSQLQGDLEKSFQGFTWTLQQLAKLLEKMPDDKDILELYGLTKNWFGQLLMKQGKYLEAKNLFKEAFDTLINVYGAVNDASVTILNNISVAYVNLEKYAEARETLLEAMELTKELKDATQEGILQANLGLVYLREGLMSQAENACRLAWKLGKQHQNPDAVEQAEYCLNEIKTTLNGEKRQ</sequence>
<organism>
    <name type="scientific">Drosophila melanogaster</name>
    <name type="common">Fruit fly</name>
    <dbReference type="NCBI Taxonomy" id="7227"/>
    <lineage>
        <taxon>Eukaryota</taxon>
        <taxon>Metazoa</taxon>
        <taxon>Ecdysozoa</taxon>
        <taxon>Arthropoda</taxon>
        <taxon>Hexapoda</taxon>
        <taxon>Insecta</taxon>
        <taxon>Pterygota</taxon>
        <taxon>Neoptera</taxon>
        <taxon>Endopterygota</taxon>
        <taxon>Diptera</taxon>
        <taxon>Brachycera</taxon>
        <taxon>Muscomorpha</taxon>
        <taxon>Ephydroidea</taxon>
        <taxon>Drosophilidae</taxon>
        <taxon>Drosophila</taxon>
        <taxon>Sophophora</taxon>
    </lineage>
</organism>
<proteinExistence type="evidence at transcript level"/>
<dbReference type="EMBL" id="AE014134">
    <property type="protein sequence ID" value="AAF53745.2"/>
    <property type="molecule type" value="Genomic_DNA"/>
</dbReference>
<dbReference type="EMBL" id="AY071630">
    <property type="protein sequence ID" value="AAL49252.1"/>
    <property type="molecule type" value="mRNA"/>
</dbReference>
<dbReference type="RefSeq" id="NP_609934.3">
    <property type="nucleotide sequence ID" value="NM_136090.3"/>
</dbReference>
<dbReference type="SMR" id="Q8SYD0"/>
<dbReference type="BioGRID" id="61160">
    <property type="interactions" value="2"/>
</dbReference>
<dbReference type="DIP" id="DIP-22153N"/>
<dbReference type="FunCoup" id="Q8SYD0">
    <property type="interactions" value="1145"/>
</dbReference>
<dbReference type="IntAct" id="Q8SYD0">
    <property type="interactions" value="3"/>
</dbReference>
<dbReference type="STRING" id="7227.FBpp0080720"/>
<dbReference type="PaxDb" id="7227-FBpp0080720"/>
<dbReference type="DNASU" id="35172"/>
<dbReference type="EnsemblMetazoa" id="FBtr0081178">
    <property type="protein sequence ID" value="FBpp0080720"/>
    <property type="gene ID" value="FBgn0032744"/>
</dbReference>
<dbReference type="GeneID" id="35172"/>
<dbReference type="KEGG" id="dme:Dmel_CG15173"/>
<dbReference type="UCSC" id="CG15173-RA">
    <property type="organism name" value="d. melanogaster"/>
</dbReference>
<dbReference type="AGR" id="FB:FBgn0032744"/>
<dbReference type="CTD" id="54902"/>
<dbReference type="FlyBase" id="FBgn0032744">
    <property type="gene designation" value="Ttc19"/>
</dbReference>
<dbReference type="VEuPathDB" id="VectorBase:FBgn0032744"/>
<dbReference type="eggNOG" id="KOG1840">
    <property type="taxonomic scope" value="Eukaryota"/>
</dbReference>
<dbReference type="GeneTree" id="ENSGT00390000009194"/>
<dbReference type="HOGENOM" id="CLU_057135_0_0_1"/>
<dbReference type="InParanoid" id="Q8SYD0"/>
<dbReference type="OMA" id="ANTYYEM"/>
<dbReference type="OrthoDB" id="5986190at2759"/>
<dbReference type="PhylomeDB" id="Q8SYD0"/>
<dbReference type="Reactome" id="R-DME-9865881">
    <property type="pathway name" value="Complex III assembly"/>
</dbReference>
<dbReference type="BioGRID-ORCS" id="35172">
    <property type="hits" value="0 hits in 1 CRISPR screen"/>
</dbReference>
<dbReference type="GenomeRNAi" id="35172"/>
<dbReference type="PRO" id="PR:Q8SYD0"/>
<dbReference type="Proteomes" id="UP000000803">
    <property type="component" value="Chromosome 2L"/>
</dbReference>
<dbReference type="Bgee" id="FBgn0032744">
    <property type="expression patterns" value="Expressed in muscle cell in insect leg and 93 other cell types or tissues"/>
</dbReference>
<dbReference type="GO" id="GO:0005743">
    <property type="term" value="C:mitochondrial inner membrane"/>
    <property type="evidence" value="ECO:0000250"/>
    <property type="project" value="FlyBase"/>
</dbReference>
<dbReference type="GO" id="GO:0005739">
    <property type="term" value="C:mitochondrion"/>
    <property type="evidence" value="ECO:0000314"/>
    <property type="project" value="UniProtKB"/>
</dbReference>
<dbReference type="GO" id="GO:0034551">
    <property type="term" value="P:mitochondrial respiratory chain complex III assembly"/>
    <property type="evidence" value="ECO:0000315"/>
    <property type="project" value="UniProtKB"/>
</dbReference>
<dbReference type="FunFam" id="1.25.40.10:FF:001241">
    <property type="entry name" value="Tetratricopeptide repeat protein, putative"/>
    <property type="match status" value="1"/>
</dbReference>
<dbReference type="Gene3D" id="1.25.40.10">
    <property type="entry name" value="Tetratricopeptide repeat domain"/>
    <property type="match status" value="2"/>
</dbReference>
<dbReference type="InterPro" id="IPR011990">
    <property type="entry name" value="TPR-like_helical_dom_sf"/>
</dbReference>
<dbReference type="InterPro" id="IPR040395">
    <property type="entry name" value="TTC19"/>
</dbReference>
<dbReference type="PANTHER" id="PTHR13143">
    <property type="entry name" value="TETRATRICOPEPTIDE REPEAT PROTEIN 19"/>
    <property type="match status" value="1"/>
</dbReference>
<dbReference type="PANTHER" id="PTHR13143:SF6">
    <property type="entry name" value="TETRATRICOPEPTIDE REPEAT PROTEIN 19, MITOCHONDRIAL"/>
    <property type="match status" value="1"/>
</dbReference>
<dbReference type="Pfam" id="PF13424">
    <property type="entry name" value="TPR_12"/>
    <property type="match status" value="1"/>
</dbReference>
<dbReference type="SUPFAM" id="SSF48452">
    <property type="entry name" value="TPR-like"/>
    <property type="match status" value="2"/>
</dbReference>
<dbReference type="PROSITE" id="PS50293">
    <property type="entry name" value="TPR_REGION"/>
    <property type="match status" value="1"/>
</dbReference>
<accession>Q8SYD0</accession>
<accession>Q9VJ13</accession>
<gene>
    <name type="primary">Ttc19</name>
    <name type="ORF">CG15173</name>
</gene>
<evidence type="ECO:0000250" key="1"/>
<evidence type="ECO:0000255" key="2"/>
<evidence type="ECO:0000269" key="3">
    <source>
    </source>
</evidence>
<evidence type="ECO:0000305" key="4"/>